<protein>
    <recommendedName>
        <fullName evidence="1">Argininosuccinate lyase</fullName>
        <shortName evidence="1">ASAL</shortName>
        <ecNumber evidence="1">4.3.2.1</ecNumber>
    </recommendedName>
    <alternativeName>
        <fullName evidence="1">Arginosuccinase</fullName>
    </alternativeName>
</protein>
<proteinExistence type="inferred from homology"/>
<evidence type="ECO:0000255" key="1">
    <source>
        <dbReference type="HAMAP-Rule" id="MF_00006"/>
    </source>
</evidence>
<evidence type="ECO:0000256" key="2">
    <source>
        <dbReference type="SAM" id="MobiDB-lite"/>
    </source>
</evidence>
<name>ARLY_SACEN</name>
<comment type="catalytic activity">
    <reaction evidence="1">
        <text>2-(N(omega)-L-arginino)succinate = fumarate + L-arginine</text>
        <dbReference type="Rhea" id="RHEA:24020"/>
        <dbReference type="ChEBI" id="CHEBI:29806"/>
        <dbReference type="ChEBI" id="CHEBI:32682"/>
        <dbReference type="ChEBI" id="CHEBI:57472"/>
        <dbReference type="EC" id="4.3.2.1"/>
    </reaction>
</comment>
<comment type="pathway">
    <text evidence="1">Amino-acid biosynthesis; L-arginine biosynthesis; L-arginine from L-ornithine and carbamoyl phosphate: step 3/3.</text>
</comment>
<comment type="subcellular location">
    <subcellularLocation>
        <location evidence="1">Cytoplasm</location>
    </subcellularLocation>
</comment>
<comment type="similarity">
    <text evidence="1">Belongs to the lyase 1 family. Argininosuccinate lyase subfamily.</text>
</comment>
<feature type="chain" id="PRO_0000321453" description="Argininosuccinate lyase">
    <location>
        <begin position="1"/>
        <end position="480"/>
    </location>
</feature>
<feature type="region of interest" description="Disordered" evidence="2">
    <location>
        <begin position="1"/>
        <end position="20"/>
    </location>
</feature>
<reference key="1">
    <citation type="journal article" date="2007" name="Nat. Biotechnol.">
        <title>Complete genome sequence of the erythromycin-producing bacterium Saccharopolyspora erythraea NRRL23338.</title>
        <authorList>
            <person name="Oliynyk M."/>
            <person name="Samborskyy M."/>
            <person name="Lester J.B."/>
            <person name="Mironenko T."/>
            <person name="Scott N."/>
            <person name="Dickens S."/>
            <person name="Haydock S.F."/>
            <person name="Leadlay P.F."/>
        </authorList>
    </citation>
    <scope>NUCLEOTIDE SEQUENCE [LARGE SCALE GENOMIC DNA]</scope>
    <source>
        <strain>ATCC 11635 / DSM 40517 / JCM 4748 / NBRC 13426 / NCIMB 8594 / NRRL 2338</strain>
    </source>
</reference>
<gene>
    <name evidence="1" type="primary">argH</name>
    <name type="ordered locus">SACE_5256</name>
</gene>
<organism>
    <name type="scientific">Saccharopolyspora erythraea (strain ATCC 11635 / DSM 40517 / JCM 4748 / NBRC 13426 / NCIMB 8594 / NRRL 2338)</name>
    <dbReference type="NCBI Taxonomy" id="405948"/>
    <lineage>
        <taxon>Bacteria</taxon>
        <taxon>Bacillati</taxon>
        <taxon>Actinomycetota</taxon>
        <taxon>Actinomycetes</taxon>
        <taxon>Pseudonocardiales</taxon>
        <taxon>Pseudonocardiaceae</taxon>
        <taxon>Saccharopolyspora</taxon>
    </lineage>
</organism>
<keyword id="KW-0028">Amino-acid biosynthesis</keyword>
<keyword id="KW-0055">Arginine biosynthesis</keyword>
<keyword id="KW-0963">Cytoplasm</keyword>
<keyword id="KW-0456">Lyase</keyword>
<keyword id="KW-1185">Reference proteome</keyword>
<accession>A4FKC1</accession>
<dbReference type="EC" id="4.3.2.1" evidence="1"/>
<dbReference type="EMBL" id="AM420293">
    <property type="protein sequence ID" value="CAM04496.1"/>
    <property type="molecule type" value="Genomic_DNA"/>
</dbReference>
<dbReference type="RefSeq" id="WP_009951557.1">
    <property type="nucleotide sequence ID" value="NC_009142.1"/>
</dbReference>
<dbReference type="SMR" id="A4FKC1"/>
<dbReference type="STRING" id="405948.SACE_5256"/>
<dbReference type="KEGG" id="sen:SACE_5256"/>
<dbReference type="eggNOG" id="COG0165">
    <property type="taxonomic scope" value="Bacteria"/>
</dbReference>
<dbReference type="HOGENOM" id="CLU_027272_2_2_11"/>
<dbReference type="OrthoDB" id="9769623at2"/>
<dbReference type="UniPathway" id="UPA00068">
    <property type="reaction ID" value="UER00114"/>
</dbReference>
<dbReference type="Proteomes" id="UP000006728">
    <property type="component" value="Chromosome"/>
</dbReference>
<dbReference type="GO" id="GO:0005829">
    <property type="term" value="C:cytosol"/>
    <property type="evidence" value="ECO:0007669"/>
    <property type="project" value="TreeGrafter"/>
</dbReference>
<dbReference type="GO" id="GO:0004056">
    <property type="term" value="F:argininosuccinate lyase activity"/>
    <property type="evidence" value="ECO:0007669"/>
    <property type="project" value="UniProtKB-UniRule"/>
</dbReference>
<dbReference type="GO" id="GO:0042450">
    <property type="term" value="P:arginine biosynthetic process via ornithine"/>
    <property type="evidence" value="ECO:0007669"/>
    <property type="project" value="InterPro"/>
</dbReference>
<dbReference type="GO" id="GO:0006526">
    <property type="term" value="P:L-arginine biosynthetic process"/>
    <property type="evidence" value="ECO:0007669"/>
    <property type="project" value="UniProtKB-UniRule"/>
</dbReference>
<dbReference type="CDD" id="cd01359">
    <property type="entry name" value="Argininosuccinate_lyase"/>
    <property type="match status" value="1"/>
</dbReference>
<dbReference type="FunFam" id="1.10.275.10:FF:000002">
    <property type="entry name" value="Argininosuccinate lyase"/>
    <property type="match status" value="1"/>
</dbReference>
<dbReference type="FunFam" id="1.10.40.30:FF:000001">
    <property type="entry name" value="Argininosuccinate lyase"/>
    <property type="match status" value="1"/>
</dbReference>
<dbReference type="FunFam" id="1.20.200.10:FF:000015">
    <property type="entry name" value="argininosuccinate lyase isoform X2"/>
    <property type="match status" value="1"/>
</dbReference>
<dbReference type="Gene3D" id="1.10.40.30">
    <property type="entry name" value="Fumarase/aspartase (C-terminal domain)"/>
    <property type="match status" value="1"/>
</dbReference>
<dbReference type="Gene3D" id="1.20.200.10">
    <property type="entry name" value="Fumarase/aspartase (Central domain)"/>
    <property type="match status" value="1"/>
</dbReference>
<dbReference type="Gene3D" id="1.10.275.10">
    <property type="entry name" value="Fumarase/aspartase (N-terminal domain)"/>
    <property type="match status" value="1"/>
</dbReference>
<dbReference type="HAMAP" id="MF_00006">
    <property type="entry name" value="Arg_succ_lyase"/>
    <property type="match status" value="1"/>
</dbReference>
<dbReference type="InterPro" id="IPR029419">
    <property type="entry name" value="Arg_succ_lyase_C"/>
</dbReference>
<dbReference type="InterPro" id="IPR009049">
    <property type="entry name" value="Argininosuccinate_lyase"/>
</dbReference>
<dbReference type="InterPro" id="IPR024083">
    <property type="entry name" value="Fumarase/histidase_N"/>
</dbReference>
<dbReference type="InterPro" id="IPR020557">
    <property type="entry name" value="Fumarate_lyase_CS"/>
</dbReference>
<dbReference type="InterPro" id="IPR000362">
    <property type="entry name" value="Fumarate_lyase_fam"/>
</dbReference>
<dbReference type="InterPro" id="IPR022761">
    <property type="entry name" value="Fumarate_lyase_N"/>
</dbReference>
<dbReference type="InterPro" id="IPR008948">
    <property type="entry name" value="L-Aspartase-like"/>
</dbReference>
<dbReference type="NCBIfam" id="TIGR00838">
    <property type="entry name" value="argH"/>
    <property type="match status" value="1"/>
</dbReference>
<dbReference type="PANTHER" id="PTHR43814">
    <property type="entry name" value="ARGININOSUCCINATE LYASE"/>
    <property type="match status" value="1"/>
</dbReference>
<dbReference type="PANTHER" id="PTHR43814:SF1">
    <property type="entry name" value="ARGININOSUCCINATE LYASE"/>
    <property type="match status" value="1"/>
</dbReference>
<dbReference type="Pfam" id="PF14698">
    <property type="entry name" value="ASL_C2"/>
    <property type="match status" value="1"/>
</dbReference>
<dbReference type="Pfam" id="PF00206">
    <property type="entry name" value="Lyase_1"/>
    <property type="match status" value="1"/>
</dbReference>
<dbReference type="PRINTS" id="PR00145">
    <property type="entry name" value="ARGSUCLYASE"/>
</dbReference>
<dbReference type="PRINTS" id="PR00149">
    <property type="entry name" value="FUMRATELYASE"/>
</dbReference>
<dbReference type="SUPFAM" id="SSF48557">
    <property type="entry name" value="L-aspartase-like"/>
    <property type="match status" value="1"/>
</dbReference>
<dbReference type="PROSITE" id="PS00163">
    <property type="entry name" value="FUMARATE_LYASES"/>
    <property type="match status" value="1"/>
</dbReference>
<sequence>MTQQDGGQAGQAEPTKLWGGRFASGPAEAMAALSLSTHFDWRLAPYDIAGSRAHTRVLHKAGLLTADELERMLAGLDVLAADVESGAFQPVIDDEDVHTALERGLLERVGPELGGKLRAGRSRNDQVATLFRMWLRDAVRRVTSGVLDVVDALTAQAAAHPDAVLPGRTHLQHAQPVLLAHHLLAHCQSLLRDVSRLRDWDARTAFSPYGSGALAGSSLGLDPQAVAAELGFDGGAVDNSIDGTASRDFAAEAAFCLAMLGVNLSRVAEEVIIWNTAEFGYVTLDDAWATGSSIMPQKKNPDVAELARGKSGRLVGNLTGLLATLKAQPLAYNRDLQEDKEPVFDSVEQLDLLLPAMAGMLGTLTFHTERLAELAPAGFTLATDIAEWLVRQGVPFRVAHEASGECVRKAEARGAGLDELTDSELAATHPALTPEVREVLTVGGSIASRDAHGGTAPARVAEQRERVVATVAGHRQWLAG</sequence>